<reference key="1">
    <citation type="submission" date="2009-01" db="EMBL/GenBank/DDBJ databases">
        <title>Complete sequence of Desulfovibrio desulfuricans subsp. desulfuricans str. ATCC 27774.</title>
        <authorList>
            <consortium name="US DOE Joint Genome Institute"/>
            <person name="Lucas S."/>
            <person name="Copeland A."/>
            <person name="Lapidus A."/>
            <person name="Glavina del Rio T."/>
            <person name="Tice H."/>
            <person name="Bruce D."/>
            <person name="Goodwin L."/>
            <person name="Pitluck S."/>
            <person name="Sims D."/>
            <person name="Lu M."/>
            <person name="Kiss H."/>
            <person name="Meineke L."/>
            <person name="Brettin T."/>
            <person name="Detter J.C."/>
            <person name="Han C."/>
            <person name="Larimer F."/>
            <person name="Land M."/>
            <person name="Hauser L."/>
            <person name="Kyrpides N."/>
            <person name="Ovchinnikova G."/>
            <person name="Hazen T.C."/>
        </authorList>
    </citation>
    <scope>NUCLEOTIDE SEQUENCE [LARGE SCALE GENOMIC DNA]</scope>
    <source>
        <strain>ATCC 27774 / DSM 6949 / MB</strain>
    </source>
</reference>
<proteinExistence type="inferred from homology"/>
<organism>
    <name type="scientific">Desulfovibrio desulfuricans (strain ATCC 27774 / DSM 6949 / MB)</name>
    <dbReference type="NCBI Taxonomy" id="525146"/>
    <lineage>
        <taxon>Bacteria</taxon>
        <taxon>Pseudomonadati</taxon>
        <taxon>Thermodesulfobacteriota</taxon>
        <taxon>Desulfovibrionia</taxon>
        <taxon>Desulfovibrionales</taxon>
        <taxon>Desulfovibrionaceae</taxon>
        <taxon>Desulfovibrio</taxon>
    </lineage>
</organism>
<evidence type="ECO:0000255" key="1">
    <source>
        <dbReference type="HAMAP-Rule" id="MF_01027"/>
    </source>
</evidence>
<gene>
    <name evidence="1" type="primary">leuC</name>
    <name type="ordered locus">Ddes_0506</name>
</gene>
<sequence>MAQTLAQKILQAHTDDAVEQDGQIVQCRVSMVLANDITGPLAIKSFYGMGAKKVFDRTKIALVMDHFTPQKDIDSANQVLISRRFAEEQDIVHYYEGGDCGVEHTLLPEQGLVGPGDLVIGADSHTCTYGGIGAFATGMGSTDIAAGMALGETWLKVPSTIRVNISGDMPRWLRGKDLMLMLIGAIGVDGALYKALEFGGSVVDALSVEGRLSMANMAIEAGGKAGLFAVDAKTRTYCAEHKRPGVLENMAADSGAVYERVVDMNVTGKEPVVACPHLPSNVKPVSEVRDTAIQQVVIGSCTNGRISDMRDAAEVLRGRKVDKGVRCIVLPSTPTVWKQCLREGLIEVFMEAGCIVGPSTCGPCLGGHMGILGDGERAVATTNRNFRGRMGSLSSEVYLASPLVAAASAVTGYVAGPDQL</sequence>
<comment type="function">
    <text evidence="1">Catalyzes the isomerization between 2-isopropylmalate and 3-isopropylmalate, via the formation of 2-isopropylmaleate.</text>
</comment>
<comment type="catalytic activity">
    <reaction evidence="1">
        <text>(2R,3S)-3-isopropylmalate = (2S)-2-isopropylmalate</text>
        <dbReference type="Rhea" id="RHEA:32287"/>
        <dbReference type="ChEBI" id="CHEBI:1178"/>
        <dbReference type="ChEBI" id="CHEBI:35121"/>
        <dbReference type="EC" id="4.2.1.33"/>
    </reaction>
</comment>
<comment type="cofactor">
    <cofactor evidence="1">
        <name>[4Fe-4S] cluster</name>
        <dbReference type="ChEBI" id="CHEBI:49883"/>
    </cofactor>
    <text evidence="1">Binds 1 [4Fe-4S] cluster per subunit.</text>
</comment>
<comment type="pathway">
    <text evidence="1">Amino-acid biosynthesis; L-leucine biosynthesis; L-leucine from 3-methyl-2-oxobutanoate: step 2/4.</text>
</comment>
<comment type="subunit">
    <text evidence="1">Heterodimer of LeuC and LeuD.</text>
</comment>
<comment type="similarity">
    <text evidence="1">Belongs to the aconitase/IPM isomerase family. LeuC type 2 subfamily.</text>
</comment>
<name>LEUC_DESDA</name>
<protein>
    <recommendedName>
        <fullName evidence="1">3-isopropylmalate dehydratase large subunit</fullName>
        <ecNumber evidence="1">4.2.1.33</ecNumber>
    </recommendedName>
    <alternativeName>
        <fullName evidence="1">Alpha-IPM isomerase</fullName>
        <shortName evidence="1">IPMI</shortName>
    </alternativeName>
    <alternativeName>
        <fullName evidence="1">Isopropylmalate isomerase</fullName>
    </alternativeName>
</protein>
<dbReference type="EC" id="4.2.1.33" evidence="1"/>
<dbReference type="EMBL" id="CP001358">
    <property type="protein sequence ID" value="ACL48417.1"/>
    <property type="molecule type" value="Genomic_DNA"/>
</dbReference>
<dbReference type="SMR" id="B8J4F9"/>
<dbReference type="STRING" id="525146.Ddes_0506"/>
<dbReference type="KEGG" id="dds:Ddes_0506"/>
<dbReference type="eggNOG" id="COG0065">
    <property type="taxonomic scope" value="Bacteria"/>
</dbReference>
<dbReference type="HOGENOM" id="CLU_006714_3_4_7"/>
<dbReference type="UniPathway" id="UPA00048">
    <property type="reaction ID" value="UER00071"/>
</dbReference>
<dbReference type="GO" id="GO:0003861">
    <property type="term" value="F:3-isopropylmalate dehydratase activity"/>
    <property type="evidence" value="ECO:0007669"/>
    <property type="project" value="UniProtKB-UniRule"/>
</dbReference>
<dbReference type="GO" id="GO:0051539">
    <property type="term" value="F:4 iron, 4 sulfur cluster binding"/>
    <property type="evidence" value="ECO:0007669"/>
    <property type="project" value="UniProtKB-KW"/>
</dbReference>
<dbReference type="GO" id="GO:0046872">
    <property type="term" value="F:metal ion binding"/>
    <property type="evidence" value="ECO:0007669"/>
    <property type="project" value="UniProtKB-KW"/>
</dbReference>
<dbReference type="GO" id="GO:0009098">
    <property type="term" value="P:L-leucine biosynthetic process"/>
    <property type="evidence" value="ECO:0007669"/>
    <property type="project" value="UniProtKB-UniRule"/>
</dbReference>
<dbReference type="CDD" id="cd01583">
    <property type="entry name" value="IPMI"/>
    <property type="match status" value="1"/>
</dbReference>
<dbReference type="Gene3D" id="3.30.499.10">
    <property type="entry name" value="Aconitase, domain 3"/>
    <property type="match status" value="2"/>
</dbReference>
<dbReference type="HAMAP" id="MF_01027">
    <property type="entry name" value="LeuC_type2"/>
    <property type="match status" value="1"/>
</dbReference>
<dbReference type="InterPro" id="IPR015931">
    <property type="entry name" value="Acnase/IPM_dHydase_lsu_aba_1/3"/>
</dbReference>
<dbReference type="InterPro" id="IPR001030">
    <property type="entry name" value="Acoase/IPM_deHydtase_lsu_aba"/>
</dbReference>
<dbReference type="InterPro" id="IPR018136">
    <property type="entry name" value="Aconitase_4Fe-4S_BS"/>
</dbReference>
<dbReference type="InterPro" id="IPR036008">
    <property type="entry name" value="Aconitase_4Fe-4S_dom"/>
</dbReference>
<dbReference type="InterPro" id="IPR011826">
    <property type="entry name" value="HAcnase/IPMdehydase_lsu_prok"/>
</dbReference>
<dbReference type="InterPro" id="IPR006251">
    <property type="entry name" value="Homoacnase/IPMdehydase_lsu"/>
</dbReference>
<dbReference type="InterPro" id="IPR050067">
    <property type="entry name" value="IPM_dehydratase_rel_enz"/>
</dbReference>
<dbReference type="InterPro" id="IPR033941">
    <property type="entry name" value="IPMI_cat"/>
</dbReference>
<dbReference type="NCBIfam" id="TIGR01343">
    <property type="entry name" value="hacA_fam"/>
    <property type="match status" value="1"/>
</dbReference>
<dbReference type="NCBIfam" id="TIGR02086">
    <property type="entry name" value="IPMI_arch"/>
    <property type="match status" value="1"/>
</dbReference>
<dbReference type="NCBIfam" id="NF001614">
    <property type="entry name" value="PRK00402.1"/>
    <property type="match status" value="1"/>
</dbReference>
<dbReference type="PANTHER" id="PTHR43822:SF16">
    <property type="entry name" value="3-ISOPROPYLMALATE DEHYDRATASE LARGE SUBUNIT 2"/>
    <property type="match status" value="1"/>
</dbReference>
<dbReference type="PANTHER" id="PTHR43822">
    <property type="entry name" value="HOMOACONITASE, MITOCHONDRIAL-RELATED"/>
    <property type="match status" value="1"/>
</dbReference>
<dbReference type="Pfam" id="PF00330">
    <property type="entry name" value="Aconitase"/>
    <property type="match status" value="1"/>
</dbReference>
<dbReference type="PRINTS" id="PR00415">
    <property type="entry name" value="ACONITASE"/>
</dbReference>
<dbReference type="SUPFAM" id="SSF53732">
    <property type="entry name" value="Aconitase iron-sulfur domain"/>
    <property type="match status" value="1"/>
</dbReference>
<dbReference type="PROSITE" id="PS00450">
    <property type="entry name" value="ACONITASE_1"/>
    <property type="match status" value="1"/>
</dbReference>
<dbReference type="PROSITE" id="PS01244">
    <property type="entry name" value="ACONITASE_2"/>
    <property type="match status" value="1"/>
</dbReference>
<keyword id="KW-0004">4Fe-4S</keyword>
<keyword id="KW-0028">Amino-acid biosynthesis</keyword>
<keyword id="KW-0100">Branched-chain amino acid biosynthesis</keyword>
<keyword id="KW-0408">Iron</keyword>
<keyword id="KW-0411">Iron-sulfur</keyword>
<keyword id="KW-0432">Leucine biosynthesis</keyword>
<keyword id="KW-0456">Lyase</keyword>
<keyword id="KW-0479">Metal-binding</keyword>
<accession>B8J4F9</accession>
<feature type="chain" id="PRO_1000149378" description="3-isopropylmalate dehydratase large subunit">
    <location>
        <begin position="1"/>
        <end position="420"/>
    </location>
</feature>
<feature type="binding site" evidence="1">
    <location>
        <position position="301"/>
    </location>
    <ligand>
        <name>[4Fe-4S] cluster</name>
        <dbReference type="ChEBI" id="CHEBI:49883"/>
    </ligand>
</feature>
<feature type="binding site" evidence="1">
    <location>
        <position position="361"/>
    </location>
    <ligand>
        <name>[4Fe-4S] cluster</name>
        <dbReference type="ChEBI" id="CHEBI:49883"/>
    </ligand>
</feature>
<feature type="binding site" evidence="1">
    <location>
        <position position="364"/>
    </location>
    <ligand>
        <name>[4Fe-4S] cluster</name>
        <dbReference type="ChEBI" id="CHEBI:49883"/>
    </ligand>
</feature>